<organism>
    <name type="scientific">Equus caballus</name>
    <name type="common">Horse</name>
    <dbReference type="NCBI Taxonomy" id="9796"/>
    <lineage>
        <taxon>Eukaryota</taxon>
        <taxon>Metazoa</taxon>
        <taxon>Chordata</taxon>
        <taxon>Craniata</taxon>
        <taxon>Vertebrata</taxon>
        <taxon>Euteleostomi</taxon>
        <taxon>Mammalia</taxon>
        <taxon>Eutheria</taxon>
        <taxon>Laurasiatheria</taxon>
        <taxon>Perissodactyla</taxon>
        <taxon>Equidae</taxon>
        <taxon>Equus</taxon>
    </lineage>
</organism>
<keyword id="KW-0965">Cell junction</keyword>
<keyword id="KW-1003">Cell membrane</keyword>
<keyword id="KW-0303">Gap junction</keyword>
<keyword id="KW-0472">Membrane</keyword>
<keyword id="KW-0597">Phosphoprotein</keyword>
<keyword id="KW-1185">Reference proteome</keyword>
<keyword id="KW-0812">Transmembrane</keyword>
<keyword id="KW-1133">Transmembrane helix</keyword>
<feature type="chain" id="PRO_0000057848" description="Gap junction beta-1 protein">
    <location>
        <begin position="1"/>
        <end position="283"/>
    </location>
</feature>
<feature type="topological domain" description="Cytoplasmic" evidence="4">
    <location>
        <begin position="1"/>
        <end position="22"/>
    </location>
</feature>
<feature type="transmembrane region" description="Helical" evidence="4">
    <location>
        <begin position="23"/>
        <end position="45"/>
    </location>
</feature>
<feature type="topological domain" description="Extracellular" evidence="4">
    <location>
        <begin position="46"/>
        <end position="75"/>
    </location>
</feature>
<feature type="transmembrane region" description="Helical" evidence="4">
    <location>
        <begin position="76"/>
        <end position="95"/>
    </location>
</feature>
<feature type="topological domain" description="Cytoplasmic" evidence="4">
    <location>
        <begin position="96"/>
        <end position="130"/>
    </location>
</feature>
<feature type="transmembrane region" description="Helical" evidence="4">
    <location>
        <begin position="131"/>
        <end position="153"/>
    </location>
</feature>
<feature type="topological domain" description="Extracellular" evidence="4">
    <location>
        <begin position="154"/>
        <end position="191"/>
    </location>
</feature>
<feature type="transmembrane region" description="Helical" evidence="4">
    <location>
        <begin position="192"/>
        <end position="214"/>
    </location>
</feature>
<feature type="topological domain" description="Cytoplasmic" evidence="4">
    <location>
        <begin position="215"/>
        <end position="283"/>
    </location>
</feature>
<feature type="modified residue" description="Phosphoserine" evidence="2">
    <location>
        <position position="233"/>
    </location>
</feature>
<feature type="modified residue" description="Phosphoserine" evidence="3">
    <location>
        <position position="258"/>
    </location>
</feature>
<feature type="modified residue" description="Phosphoserine" evidence="3">
    <location>
        <position position="266"/>
    </location>
</feature>
<feature type="modified residue" description="Phosphoserine" evidence="3">
    <location>
        <position position="277"/>
    </location>
</feature>
<sequence length="283" mass="31963">MNWTGLYTLLSGVNRHSTAIGRVWLSVIFIFRIMVLVVAAESVWGDEKSSFICNTLQPGCNSVCYDHFFPISHVRLWSLQLILVSTPALLVAMHVAHQQHIEKKMLRLEGHGDPIHLEEVKRHKVHISGTLWWTYVISVVFRLLFEAAFMYVFYLLYPGYAMVRLVKCDAYPCPNTVDCFVSRPTEKTVFTVFMLAASGICIILNVAEVVYLIVRACARRAQRRSNPPSRKGSGFGHRLSPEYKQNEINKLLSEQDGSLKDILRRSPGTGAGLAEKSDRCSAC</sequence>
<protein>
    <recommendedName>
        <fullName>Gap junction beta-1 protein</fullName>
    </recommendedName>
    <alternativeName>
        <fullName>Connexin-32</fullName>
        <shortName>Cx32</shortName>
    </alternativeName>
</protein>
<gene>
    <name type="primary">GJB1</name>
</gene>
<name>CXB1_HORSE</name>
<dbReference type="EMBL" id="AY286490">
    <property type="protein sequence ID" value="AAQ20110.1"/>
    <property type="molecule type" value="mRNA"/>
</dbReference>
<dbReference type="RefSeq" id="NP_001075360.1">
    <property type="nucleotide sequence ID" value="NM_001081891.1"/>
</dbReference>
<dbReference type="RefSeq" id="XP_005614276.1">
    <property type="nucleotide sequence ID" value="XM_005614219.4"/>
</dbReference>
<dbReference type="RefSeq" id="XP_005614278.1">
    <property type="nucleotide sequence ID" value="XM_005614221.4"/>
</dbReference>
<dbReference type="RefSeq" id="XP_014584421.1">
    <property type="nucleotide sequence ID" value="XM_014728935.1"/>
</dbReference>
<dbReference type="RefSeq" id="XP_023488945.1">
    <property type="nucleotide sequence ID" value="XM_023633177.2"/>
</dbReference>
<dbReference type="RefSeq" id="XP_070112678.1">
    <property type="nucleotide sequence ID" value="XM_070256577.1"/>
</dbReference>
<dbReference type="RefSeq" id="XP_070112679.1">
    <property type="nucleotide sequence ID" value="XM_070256578.1"/>
</dbReference>
<dbReference type="SMR" id="Q6WGK6"/>
<dbReference type="FunCoup" id="Q6WGK6">
    <property type="interactions" value="122"/>
</dbReference>
<dbReference type="Ensembl" id="ENSECAT00000079870.1">
    <property type="protein sequence ID" value="ENSECAP00000078280.1"/>
    <property type="gene ID" value="ENSECAG00000060252.1"/>
</dbReference>
<dbReference type="Ensembl" id="ENSECAT00000080182.1">
    <property type="protein sequence ID" value="ENSECAP00000086933.1"/>
    <property type="gene ID" value="ENSECAG00000060252.1"/>
</dbReference>
<dbReference type="Ensembl" id="ENSECAT00000091597.1">
    <property type="protein sequence ID" value="ENSECAP00000066277.1"/>
    <property type="gene ID" value="ENSECAG00000060252.1"/>
</dbReference>
<dbReference type="Ensembl" id="ENSECAT00000109707.1">
    <property type="protein sequence ID" value="ENSECAP00000076791.1"/>
    <property type="gene ID" value="ENSECAG00000060252.1"/>
</dbReference>
<dbReference type="Ensembl" id="ENSECAT00000121550.1">
    <property type="protein sequence ID" value="ENSECAP00000071341.1"/>
    <property type="gene ID" value="ENSECAG00000060252.1"/>
</dbReference>
<dbReference type="Ensembl" id="ENSECAT00000126305.1">
    <property type="protein sequence ID" value="ENSECAP00000082327.1"/>
    <property type="gene ID" value="ENSECAG00000060252.1"/>
</dbReference>
<dbReference type="Ensembl" id="ENSECAT00000126630.1">
    <property type="protein sequence ID" value="ENSECAP00000081994.1"/>
    <property type="gene ID" value="ENSECAG00000060252.1"/>
</dbReference>
<dbReference type="Ensembl" id="ENSECAT00000138018.1">
    <property type="protein sequence ID" value="ENSECAP00000073450.1"/>
    <property type="gene ID" value="ENSECAG00000060252.1"/>
</dbReference>
<dbReference type="Ensembl" id="ENSECAT00000139354.1">
    <property type="protein sequence ID" value="ENSECAP00000075009.1"/>
    <property type="gene ID" value="ENSECAG00000060252.1"/>
</dbReference>
<dbReference type="Ensembl" id="ENSECAT00000146045.1">
    <property type="protein sequence ID" value="ENSECAP00000090277.1"/>
    <property type="gene ID" value="ENSECAG00000060252.1"/>
</dbReference>
<dbReference type="GeneID" id="100034021"/>
<dbReference type="KEGG" id="ecb:100034021"/>
<dbReference type="CTD" id="2705"/>
<dbReference type="GeneTree" id="ENSGT01030000234513"/>
<dbReference type="HOGENOM" id="CLU_037388_4_1_1"/>
<dbReference type="InParanoid" id="Q6WGK6"/>
<dbReference type="OrthoDB" id="8934037at2759"/>
<dbReference type="TreeFam" id="TF329606"/>
<dbReference type="Proteomes" id="UP000002281">
    <property type="component" value="Chromosome X"/>
</dbReference>
<dbReference type="GO" id="GO:0005922">
    <property type="term" value="C:connexin complex"/>
    <property type="evidence" value="ECO:0000318"/>
    <property type="project" value="GO_Central"/>
</dbReference>
<dbReference type="GO" id="GO:0005737">
    <property type="term" value="C:cytoplasm"/>
    <property type="evidence" value="ECO:0007669"/>
    <property type="project" value="Ensembl"/>
</dbReference>
<dbReference type="GO" id="GO:0005243">
    <property type="term" value="F:gap junction channel activity"/>
    <property type="evidence" value="ECO:0000318"/>
    <property type="project" value="GO_Central"/>
</dbReference>
<dbReference type="GO" id="GO:0042802">
    <property type="term" value="F:identical protein binding"/>
    <property type="evidence" value="ECO:0007669"/>
    <property type="project" value="Ensembl"/>
</dbReference>
<dbReference type="GO" id="GO:0007267">
    <property type="term" value="P:cell-cell signaling"/>
    <property type="evidence" value="ECO:0000318"/>
    <property type="project" value="GO_Central"/>
</dbReference>
<dbReference type="FunFam" id="1.20.1440.80:FF:000001">
    <property type="entry name" value="Gap junction alpha-1"/>
    <property type="match status" value="1"/>
</dbReference>
<dbReference type="Gene3D" id="1.20.1440.80">
    <property type="entry name" value="Gap junction channel protein cysteine-rich domain"/>
    <property type="match status" value="1"/>
</dbReference>
<dbReference type="InterPro" id="IPR000500">
    <property type="entry name" value="Connexin"/>
</dbReference>
<dbReference type="InterPro" id="IPR002267">
    <property type="entry name" value="Connexin32"/>
</dbReference>
<dbReference type="InterPro" id="IPR019570">
    <property type="entry name" value="Connexin_CCC"/>
</dbReference>
<dbReference type="InterPro" id="IPR017990">
    <property type="entry name" value="Connexin_CS"/>
</dbReference>
<dbReference type="InterPro" id="IPR013092">
    <property type="entry name" value="Connexin_N"/>
</dbReference>
<dbReference type="InterPro" id="IPR038359">
    <property type="entry name" value="Connexin_N_sf"/>
</dbReference>
<dbReference type="PANTHER" id="PTHR11984">
    <property type="entry name" value="CONNEXIN"/>
    <property type="match status" value="1"/>
</dbReference>
<dbReference type="PANTHER" id="PTHR11984:SF20">
    <property type="entry name" value="GAP JUNCTION BETA-1 PROTEIN"/>
    <property type="match status" value="1"/>
</dbReference>
<dbReference type="Pfam" id="PF00029">
    <property type="entry name" value="Connexin"/>
    <property type="match status" value="1"/>
</dbReference>
<dbReference type="PRINTS" id="PR00206">
    <property type="entry name" value="CONNEXIN"/>
</dbReference>
<dbReference type="PRINTS" id="PR01138">
    <property type="entry name" value="CONNEXINB1"/>
</dbReference>
<dbReference type="SMART" id="SM00037">
    <property type="entry name" value="CNX"/>
    <property type="match status" value="1"/>
</dbReference>
<dbReference type="SMART" id="SM01089">
    <property type="entry name" value="Connexin_CCC"/>
    <property type="match status" value="1"/>
</dbReference>
<dbReference type="PROSITE" id="PS00407">
    <property type="entry name" value="CONNEXINS_1"/>
    <property type="match status" value="1"/>
</dbReference>
<dbReference type="PROSITE" id="PS00408">
    <property type="entry name" value="CONNEXINS_2"/>
    <property type="match status" value="1"/>
</dbReference>
<comment type="function">
    <text evidence="1">One gap junction consists of a cluster of closely packed pairs of transmembrane channels, the connexons, through which materials of low MW diffuse from one cell to a neighboring cell.</text>
</comment>
<comment type="subunit">
    <text evidence="1">A connexon is composed of a hexamer of connexins. Interacts with CNST (By similarity).</text>
</comment>
<comment type="subcellular location">
    <subcellularLocation>
        <location>Cell membrane</location>
        <topology>Multi-pass membrane protein</topology>
    </subcellularLocation>
    <subcellularLocation>
        <location>Cell junction</location>
        <location>Gap junction</location>
    </subcellularLocation>
</comment>
<comment type="similarity">
    <text evidence="5">Belongs to the connexin family. Beta-type (group I) subfamily.</text>
</comment>
<reference key="1">
    <citation type="submission" date="2003-04" db="EMBL/GenBank/DDBJ databases">
        <title>Characterization of the equine MPZ, PMP22 and GJB1 genes and their evaluation as candidate genes for equine idiopathic laryngeal hemiplegia.</title>
        <authorList>
            <person name="Blechynden L.M."/>
            <person name="Akkari P.A."/>
            <person name="Hilbert B.J."/>
            <person name="Laing N.G."/>
        </authorList>
    </citation>
    <scope>NUCLEOTIDE SEQUENCE [MRNA]</scope>
</reference>
<accession>Q6WGK6</accession>
<proteinExistence type="evidence at transcript level"/>
<evidence type="ECO:0000250" key="1"/>
<evidence type="ECO:0000250" key="2">
    <source>
        <dbReference type="UniProtKB" id="P08033"/>
    </source>
</evidence>
<evidence type="ECO:0000250" key="3">
    <source>
        <dbReference type="UniProtKB" id="P08034"/>
    </source>
</evidence>
<evidence type="ECO:0000255" key="4"/>
<evidence type="ECO:0000305" key="5"/>